<reference key="1">
    <citation type="journal article" date="2005" name="J. Infect. Dis.">
        <title>Genome sequence of a serotype M28 strain of group A Streptococcus: potential new insights into puerperal sepsis and bacterial disease specificity.</title>
        <authorList>
            <person name="Green N.M."/>
            <person name="Zhang S."/>
            <person name="Porcella S.F."/>
            <person name="Nagiec M.J."/>
            <person name="Barbian K.D."/>
            <person name="Beres S.B."/>
            <person name="Lefebvre R.B."/>
            <person name="Musser J.M."/>
        </authorList>
    </citation>
    <scope>NUCLEOTIDE SEQUENCE [LARGE SCALE GENOMIC DNA]</scope>
    <source>
        <strain>MGAS6180</strain>
    </source>
</reference>
<organism>
    <name type="scientific">Streptococcus pyogenes serotype M28 (strain MGAS6180)</name>
    <dbReference type="NCBI Taxonomy" id="319701"/>
    <lineage>
        <taxon>Bacteria</taxon>
        <taxon>Bacillati</taxon>
        <taxon>Bacillota</taxon>
        <taxon>Bacilli</taxon>
        <taxon>Lactobacillales</taxon>
        <taxon>Streptococcaceae</taxon>
        <taxon>Streptococcus</taxon>
    </lineage>
</organism>
<name>KGUA_STRPM</name>
<keyword id="KW-0067">ATP-binding</keyword>
<keyword id="KW-0963">Cytoplasm</keyword>
<keyword id="KW-0418">Kinase</keyword>
<keyword id="KW-0547">Nucleotide-binding</keyword>
<keyword id="KW-0808">Transferase</keyword>
<accession>Q48S18</accession>
<comment type="function">
    <text evidence="1">Essential for recycling GMP and indirectly, cGMP.</text>
</comment>
<comment type="catalytic activity">
    <reaction evidence="1">
        <text>GMP + ATP = GDP + ADP</text>
        <dbReference type="Rhea" id="RHEA:20780"/>
        <dbReference type="ChEBI" id="CHEBI:30616"/>
        <dbReference type="ChEBI" id="CHEBI:58115"/>
        <dbReference type="ChEBI" id="CHEBI:58189"/>
        <dbReference type="ChEBI" id="CHEBI:456216"/>
        <dbReference type="EC" id="2.7.4.8"/>
    </reaction>
</comment>
<comment type="subcellular location">
    <subcellularLocation>
        <location evidence="1">Cytoplasm</location>
    </subcellularLocation>
</comment>
<comment type="similarity">
    <text evidence="1">Belongs to the guanylate kinase family.</text>
</comment>
<sequence length="211" mass="24186">MSERGLLIVFSGPSGVGKGTVRQEIFSTPDHKFEYSVSMTTRPQRPGEVDGVDYFFRTREEFEELIKTGQMLEYAEYVGNYYGTPLTYVNETLDKGIDVFLEIEVQGALQVKSKVPDGVFVFLTPPDLDELEDRLVGRGTDSQEVIAQRIERAKEEIALMREYDYAVVNDEVALAAERVKRIIETEHFRVERVIGRYDKMIKITKNPFKAK</sequence>
<evidence type="ECO:0000255" key="1">
    <source>
        <dbReference type="HAMAP-Rule" id="MF_00328"/>
    </source>
</evidence>
<protein>
    <recommendedName>
        <fullName evidence="1">Guanylate kinase</fullName>
        <ecNumber evidence="1">2.7.4.8</ecNumber>
    </recommendedName>
    <alternativeName>
        <fullName evidence="1">GMP kinase</fullName>
    </alternativeName>
</protein>
<proteinExistence type="inferred from homology"/>
<feature type="chain" id="PRO_0000266416" description="Guanylate kinase">
    <location>
        <begin position="1"/>
        <end position="211"/>
    </location>
</feature>
<feature type="domain" description="Guanylate kinase-like" evidence="1">
    <location>
        <begin position="5"/>
        <end position="184"/>
    </location>
</feature>
<feature type="binding site" evidence="1">
    <location>
        <begin position="12"/>
        <end position="19"/>
    </location>
    <ligand>
        <name>ATP</name>
        <dbReference type="ChEBI" id="CHEBI:30616"/>
    </ligand>
</feature>
<gene>
    <name evidence="1" type="primary">gmk</name>
    <name type="ordered locus">M28_Spy1382</name>
</gene>
<dbReference type="EC" id="2.7.4.8" evidence="1"/>
<dbReference type="EMBL" id="CP000056">
    <property type="protein sequence ID" value="AAX72492.1"/>
    <property type="molecule type" value="Genomic_DNA"/>
</dbReference>
<dbReference type="RefSeq" id="WP_002983649.1">
    <property type="nucleotide sequence ID" value="NC_007296.2"/>
</dbReference>
<dbReference type="SMR" id="Q48S18"/>
<dbReference type="GeneID" id="69900497"/>
<dbReference type="KEGG" id="spb:M28_Spy1382"/>
<dbReference type="HOGENOM" id="CLU_001715_1_2_9"/>
<dbReference type="GO" id="GO:0005829">
    <property type="term" value="C:cytosol"/>
    <property type="evidence" value="ECO:0007669"/>
    <property type="project" value="TreeGrafter"/>
</dbReference>
<dbReference type="GO" id="GO:0005524">
    <property type="term" value="F:ATP binding"/>
    <property type="evidence" value="ECO:0007669"/>
    <property type="project" value="UniProtKB-UniRule"/>
</dbReference>
<dbReference type="GO" id="GO:0004385">
    <property type="term" value="F:guanylate kinase activity"/>
    <property type="evidence" value="ECO:0007669"/>
    <property type="project" value="UniProtKB-UniRule"/>
</dbReference>
<dbReference type="CDD" id="cd00071">
    <property type="entry name" value="GMPK"/>
    <property type="match status" value="1"/>
</dbReference>
<dbReference type="FunFam" id="3.40.50.300:FF:000855">
    <property type="entry name" value="Guanylate kinase"/>
    <property type="match status" value="1"/>
</dbReference>
<dbReference type="FunFam" id="3.30.63.10:FF:000002">
    <property type="entry name" value="Guanylate kinase 1"/>
    <property type="match status" value="1"/>
</dbReference>
<dbReference type="Gene3D" id="3.30.63.10">
    <property type="entry name" value="Guanylate Kinase phosphate binding domain"/>
    <property type="match status" value="1"/>
</dbReference>
<dbReference type="Gene3D" id="3.40.50.300">
    <property type="entry name" value="P-loop containing nucleotide triphosphate hydrolases"/>
    <property type="match status" value="2"/>
</dbReference>
<dbReference type="HAMAP" id="MF_00328">
    <property type="entry name" value="Guanylate_kinase"/>
    <property type="match status" value="1"/>
</dbReference>
<dbReference type="InterPro" id="IPR008145">
    <property type="entry name" value="GK/Ca_channel_bsu"/>
</dbReference>
<dbReference type="InterPro" id="IPR008144">
    <property type="entry name" value="Guanylate_kin-like_dom"/>
</dbReference>
<dbReference type="InterPro" id="IPR017665">
    <property type="entry name" value="Guanylate_kinase"/>
</dbReference>
<dbReference type="InterPro" id="IPR020590">
    <property type="entry name" value="Guanylate_kinase_CS"/>
</dbReference>
<dbReference type="InterPro" id="IPR027417">
    <property type="entry name" value="P-loop_NTPase"/>
</dbReference>
<dbReference type="NCBIfam" id="TIGR03263">
    <property type="entry name" value="guanyl_kin"/>
    <property type="match status" value="1"/>
</dbReference>
<dbReference type="PANTHER" id="PTHR23117:SF13">
    <property type="entry name" value="GUANYLATE KINASE"/>
    <property type="match status" value="1"/>
</dbReference>
<dbReference type="PANTHER" id="PTHR23117">
    <property type="entry name" value="GUANYLATE KINASE-RELATED"/>
    <property type="match status" value="1"/>
</dbReference>
<dbReference type="Pfam" id="PF00625">
    <property type="entry name" value="Guanylate_kin"/>
    <property type="match status" value="1"/>
</dbReference>
<dbReference type="SMART" id="SM00072">
    <property type="entry name" value="GuKc"/>
    <property type="match status" value="1"/>
</dbReference>
<dbReference type="SUPFAM" id="SSF52540">
    <property type="entry name" value="P-loop containing nucleoside triphosphate hydrolases"/>
    <property type="match status" value="1"/>
</dbReference>
<dbReference type="PROSITE" id="PS00856">
    <property type="entry name" value="GUANYLATE_KINASE_1"/>
    <property type="match status" value="1"/>
</dbReference>
<dbReference type="PROSITE" id="PS50052">
    <property type="entry name" value="GUANYLATE_KINASE_2"/>
    <property type="match status" value="1"/>
</dbReference>